<name>RS12_THEPD</name>
<sequence length="147" mass="16464">MPGSKSPRGMFAARKLELKRKKFRWSDLEYKRRILQLKKKVDPLEGAPQARGIVVEKVGIESRQPNSAVRKCVRVQLLKNGKVVTAFLPGDGALLFVNEHDEVVIEGIGGPEGRAYGDLPGVRWKVIKVNGVSLKEILRGRKQKPTR</sequence>
<accession>A1RWW1</accession>
<organism>
    <name type="scientific">Thermofilum pendens (strain DSM 2475 / Hrk 5)</name>
    <dbReference type="NCBI Taxonomy" id="368408"/>
    <lineage>
        <taxon>Archaea</taxon>
        <taxon>Thermoproteota</taxon>
        <taxon>Thermoprotei</taxon>
        <taxon>Thermofilales</taxon>
        <taxon>Thermofilaceae</taxon>
        <taxon>Thermofilum</taxon>
    </lineage>
</organism>
<keyword id="KW-1185">Reference proteome</keyword>
<keyword id="KW-0687">Ribonucleoprotein</keyword>
<keyword id="KW-0689">Ribosomal protein</keyword>
<keyword id="KW-0694">RNA-binding</keyword>
<keyword id="KW-0699">rRNA-binding</keyword>
<reference key="1">
    <citation type="journal article" date="2008" name="J. Bacteriol.">
        <title>Genome sequence of Thermofilum pendens reveals an exceptional loss of biosynthetic pathways without genome reduction.</title>
        <authorList>
            <person name="Anderson I."/>
            <person name="Rodriguez J."/>
            <person name="Susanti D."/>
            <person name="Porat I."/>
            <person name="Reich C."/>
            <person name="Ulrich L.E."/>
            <person name="Elkins J.G."/>
            <person name="Mavromatis K."/>
            <person name="Lykidis A."/>
            <person name="Kim E."/>
            <person name="Thompson L.S."/>
            <person name="Nolan M."/>
            <person name="Land M."/>
            <person name="Copeland A."/>
            <person name="Lapidus A."/>
            <person name="Lucas S."/>
            <person name="Detter C."/>
            <person name="Zhulin I.B."/>
            <person name="Olsen G.J."/>
            <person name="Whitman W."/>
            <person name="Mukhopadhyay B."/>
            <person name="Bristow J."/>
            <person name="Kyrpides N."/>
        </authorList>
    </citation>
    <scope>NUCLEOTIDE SEQUENCE [LARGE SCALE GENOMIC DNA]</scope>
    <source>
        <strain>DSM 2475 / Hrk 5</strain>
    </source>
</reference>
<gene>
    <name evidence="1" type="primary">rps12</name>
    <name type="ordered locus">Tpen_0281</name>
</gene>
<feature type="chain" id="PRO_0000296056" description="Small ribosomal subunit protein uS12">
    <location>
        <begin position="1"/>
        <end position="147"/>
    </location>
</feature>
<comment type="function">
    <text evidence="1">With S4 and S5 plays an important role in translational accuracy. Located at the interface of the 30S and 50S subunits.</text>
</comment>
<comment type="subunit">
    <text evidence="1">Part of the 30S ribosomal subunit.</text>
</comment>
<comment type="similarity">
    <text evidence="1">Belongs to the universal ribosomal protein uS12 family.</text>
</comment>
<proteinExistence type="inferred from homology"/>
<dbReference type="EMBL" id="CP000505">
    <property type="protein sequence ID" value="ABL77691.1"/>
    <property type="molecule type" value="Genomic_DNA"/>
</dbReference>
<dbReference type="RefSeq" id="WP_011751956.1">
    <property type="nucleotide sequence ID" value="NC_008698.1"/>
</dbReference>
<dbReference type="SMR" id="A1RWW1"/>
<dbReference type="STRING" id="368408.Tpen_0281"/>
<dbReference type="EnsemblBacteria" id="ABL77691">
    <property type="protein sequence ID" value="ABL77691"/>
    <property type="gene ID" value="Tpen_0281"/>
</dbReference>
<dbReference type="GeneID" id="4602091"/>
<dbReference type="KEGG" id="tpe:Tpen_0281"/>
<dbReference type="eggNOG" id="arCOG04255">
    <property type="taxonomic scope" value="Archaea"/>
</dbReference>
<dbReference type="HOGENOM" id="CLU_115574_0_1_2"/>
<dbReference type="OrthoDB" id="45154at2157"/>
<dbReference type="Proteomes" id="UP000000641">
    <property type="component" value="Chromosome"/>
</dbReference>
<dbReference type="GO" id="GO:0015935">
    <property type="term" value="C:small ribosomal subunit"/>
    <property type="evidence" value="ECO:0007669"/>
    <property type="project" value="InterPro"/>
</dbReference>
<dbReference type="GO" id="GO:0019843">
    <property type="term" value="F:rRNA binding"/>
    <property type="evidence" value="ECO:0007669"/>
    <property type="project" value="UniProtKB-UniRule"/>
</dbReference>
<dbReference type="GO" id="GO:0003735">
    <property type="term" value="F:structural constituent of ribosome"/>
    <property type="evidence" value="ECO:0007669"/>
    <property type="project" value="InterPro"/>
</dbReference>
<dbReference type="GO" id="GO:0006412">
    <property type="term" value="P:translation"/>
    <property type="evidence" value="ECO:0007669"/>
    <property type="project" value="UniProtKB-UniRule"/>
</dbReference>
<dbReference type="CDD" id="cd03367">
    <property type="entry name" value="Ribosomal_S23"/>
    <property type="match status" value="1"/>
</dbReference>
<dbReference type="FunFam" id="2.40.50.140:FF:000007">
    <property type="entry name" value="40S ribosomal protein S23"/>
    <property type="match status" value="1"/>
</dbReference>
<dbReference type="Gene3D" id="2.40.50.140">
    <property type="entry name" value="Nucleic acid-binding proteins"/>
    <property type="match status" value="1"/>
</dbReference>
<dbReference type="HAMAP" id="MF_00403_A">
    <property type="entry name" value="Ribosomal_uS12_A"/>
    <property type="match status" value="1"/>
</dbReference>
<dbReference type="InterPro" id="IPR012340">
    <property type="entry name" value="NA-bd_OB-fold"/>
</dbReference>
<dbReference type="InterPro" id="IPR006032">
    <property type="entry name" value="Ribosomal_uS12"/>
</dbReference>
<dbReference type="InterPro" id="IPR022863">
    <property type="entry name" value="Ribosomal_uS12_arc"/>
</dbReference>
<dbReference type="InterPro" id="IPR005679">
    <property type="entry name" value="Ribosomal_uS12_bac"/>
</dbReference>
<dbReference type="InterPro" id="IPR005680">
    <property type="entry name" value="Ribosomal_uS12_euk/arc"/>
</dbReference>
<dbReference type="NCBIfam" id="NF003254">
    <property type="entry name" value="PRK04211.1"/>
    <property type="match status" value="1"/>
</dbReference>
<dbReference type="NCBIfam" id="TIGR00982">
    <property type="entry name" value="uS12_E_A"/>
    <property type="match status" value="1"/>
</dbReference>
<dbReference type="PANTHER" id="PTHR11652">
    <property type="entry name" value="30S RIBOSOMAL PROTEIN S12 FAMILY MEMBER"/>
    <property type="match status" value="1"/>
</dbReference>
<dbReference type="Pfam" id="PF00164">
    <property type="entry name" value="Ribosom_S12_S23"/>
    <property type="match status" value="1"/>
</dbReference>
<dbReference type="PIRSF" id="PIRSF002133">
    <property type="entry name" value="Ribosomal_S12/S23"/>
    <property type="match status" value="1"/>
</dbReference>
<dbReference type="PRINTS" id="PR01034">
    <property type="entry name" value="RIBOSOMALS12"/>
</dbReference>
<dbReference type="SUPFAM" id="SSF50249">
    <property type="entry name" value="Nucleic acid-binding proteins"/>
    <property type="match status" value="1"/>
</dbReference>
<dbReference type="PROSITE" id="PS00055">
    <property type="entry name" value="RIBOSOMAL_S12"/>
    <property type="match status" value="1"/>
</dbReference>
<evidence type="ECO:0000255" key="1">
    <source>
        <dbReference type="HAMAP-Rule" id="MF_00403"/>
    </source>
</evidence>
<evidence type="ECO:0000305" key="2"/>
<protein>
    <recommendedName>
        <fullName evidence="1">Small ribosomal subunit protein uS12</fullName>
    </recommendedName>
    <alternativeName>
        <fullName evidence="2">30S ribosomal protein S12</fullName>
    </alternativeName>
</protein>